<name>RL4_VIBVY</name>
<keyword id="KW-0687">Ribonucleoprotein</keyword>
<keyword id="KW-0689">Ribosomal protein</keyword>
<keyword id="KW-0694">RNA-binding</keyword>
<keyword id="KW-0699">rRNA-binding</keyword>
<protein>
    <recommendedName>
        <fullName evidence="1">Large ribosomal subunit protein uL4</fullName>
    </recommendedName>
    <alternativeName>
        <fullName evidence="3">50S ribosomal protein L4</fullName>
    </alternativeName>
</protein>
<reference key="1">
    <citation type="journal article" date="2003" name="Genome Res.">
        <title>Comparative genome analysis of Vibrio vulnificus, a marine pathogen.</title>
        <authorList>
            <person name="Chen C.-Y."/>
            <person name="Wu K.-M."/>
            <person name="Chang Y.-C."/>
            <person name="Chang C.-H."/>
            <person name="Tsai H.-C."/>
            <person name="Liao T.-L."/>
            <person name="Liu Y.-M."/>
            <person name="Chen H.-J."/>
            <person name="Shen A.B.-T."/>
            <person name="Li J.-C."/>
            <person name="Su T.-L."/>
            <person name="Shao C.-P."/>
            <person name="Lee C.-T."/>
            <person name="Hor L.-I."/>
            <person name="Tsai S.-F."/>
        </authorList>
    </citation>
    <scope>NUCLEOTIDE SEQUENCE [LARGE SCALE GENOMIC DNA]</scope>
    <source>
        <strain>YJ016</strain>
    </source>
</reference>
<feature type="chain" id="PRO_0000129311" description="Large ribosomal subunit protein uL4">
    <location>
        <begin position="1"/>
        <end position="200"/>
    </location>
</feature>
<feature type="region of interest" description="Disordered" evidence="2">
    <location>
        <begin position="42"/>
        <end position="65"/>
    </location>
</feature>
<evidence type="ECO:0000255" key="1">
    <source>
        <dbReference type="HAMAP-Rule" id="MF_01328"/>
    </source>
</evidence>
<evidence type="ECO:0000256" key="2">
    <source>
        <dbReference type="SAM" id="MobiDB-lite"/>
    </source>
</evidence>
<evidence type="ECO:0000305" key="3"/>
<organism>
    <name type="scientific">Vibrio vulnificus (strain YJ016)</name>
    <dbReference type="NCBI Taxonomy" id="196600"/>
    <lineage>
        <taxon>Bacteria</taxon>
        <taxon>Pseudomonadati</taxon>
        <taxon>Pseudomonadota</taxon>
        <taxon>Gammaproteobacteria</taxon>
        <taxon>Vibrionales</taxon>
        <taxon>Vibrionaceae</taxon>
        <taxon>Vibrio</taxon>
    </lineage>
</organism>
<sequence>MELMVKGAAALTVSEATFGREFNEALVHQVVVAYAAGARQGTRAQKTRSEVSGGGAKPWRQKGTGRARAGTIRSPLWRTGGVTFAAKPQDHSQKVNKKMYRGAMKSILSELVRQERLIVVDNFSVEAPKTKELVAKLKELELNDVLIVTGEVDENLFLAARNLYKVDARDVAGIDPVSLIAFNKVLMTADAVKQVEEMLA</sequence>
<gene>
    <name evidence="1" type="primary">rplD</name>
    <name type="ordered locus">VV0376</name>
</gene>
<proteinExistence type="inferred from homology"/>
<dbReference type="EMBL" id="BA000037">
    <property type="protein sequence ID" value="BAC93140.1"/>
    <property type="molecule type" value="Genomic_DNA"/>
</dbReference>
<dbReference type="RefSeq" id="WP_011078830.1">
    <property type="nucleotide sequence ID" value="NC_005139.1"/>
</dbReference>
<dbReference type="SMR" id="Q7MPI7"/>
<dbReference type="STRING" id="672.VV93_v1c03470"/>
<dbReference type="GeneID" id="93895065"/>
<dbReference type="KEGG" id="vvy:VV0376"/>
<dbReference type="eggNOG" id="COG0088">
    <property type="taxonomic scope" value="Bacteria"/>
</dbReference>
<dbReference type="HOGENOM" id="CLU_041575_5_2_6"/>
<dbReference type="Proteomes" id="UP000002675">
    <property type="component" value="Chromosome I"/>
</dbReference>
<dbReference type="GO" id="GO:1990904">
    <property type="term" value="C:ribonucleoprotein complex"/>
    <property type="evidence" value="ECO:0007669"/>
    <property type="project" value="UniProtKB-KW"/>
</dbReference>
<dbReference type="GO" id="GO:0005840">
    <property type="term" value="C:ribosome"/>
    <property type="evidence" value="ECO:0007669"/>
    <property type="project" value="UniProtKB-KW"/>
</dbReference>
<dbReference type="GO" id="GO:0019843">
    <property type="term" value="F:rRNA binding"/>
    <property type="evidence" value="ECO:0007669"/>
    <property type="project" value="UniProtKB-UniRule"/>
</dbReference>
<dbReference type="GO" id="GO:0003735">
    <property type="term" value="F:structural constituent of ribosome"/>
    <property type="evidence" value="ECO:0007669"/>
    <property type="project" value="InterPro"/>
</dbReference>
<dbReference type="GO" id="GO:0006412">
    <property type="term" value="P:translation"/>
    <property type="evidence" value="ECO:0007669"/>
    <property type="project" value="UniProtKB-UniRule"/>
</dbReference>
<dbReference type="FunFam" id="3.40.1370.10:FF:000001">
    <property type="entry name" value="50S ribosomal protein L4"/>
    <property type="match status" value="1"/>
</dbReference>
<dbReference type="Gene3D" id="3.40.1370.10">
    <property type="match status" value="1"/>
</dbReference>
<dbReference type="HAMAP" id="MF_01328_B">
    <property type="entry name" value="Ribosomal_uL4_B"/>
    <property type="match status" value="1"/>
</dbReference>
<dbReference type="InterPro" id="IPR002136">
    <property type="entry name" value="Ribosomal_uL4"/>
</dbReference>
<dbReference type="InterPro" id="IPR013005">
    <property type="entry name" value="Ribosomal_uL4-like"/>
</dbReference>
<dbReference type="InterPro" id="IPR023574">
    <property type="entry name" value="Ribosomal_uL4_dom_sf"/>
</dbReference>
<dbReference type="NCBIfam" id="TIGR03953">
    <property type="entry name" value="rplD_bact"/>
    <property type="match status" value="1"/>
</dbReference>
<dbReference type="PANTHER" id="PTHR10746">
    <property type="entry name" value="50S RIBOSOMAL PROTEIN L4"/>
    <property type="match status" value="1"/>
</dbReference>
<dbReference type="PANTHER" id="PTHR10746:SF6">
    <property type="entry name" value="LARGE RIBOSOMAL SUBUNIT PROTEIN UL4M"/>
    <property type="match status" value="1"/>
</dbReference>
<dbReference type="Pfam" id="PF00573">
    <property type="entry name" value="Ribosomal_L4"/>
    <property type="match status" value="1"/>
</dbReference>
<dbReference type="SUPFAM" id="SSF52166">
    <property type="entry name" value="Ribosomal protein L4"/>
    <property type="match status" value="1"/>
</dbReference>
<comment type="function">
    <text evidence="1">One of the primary rRNA binding proteins, this protein initially binds near the 5'-end of the 23S rRNA. It is important during the early stages of 50S assembly. It makes multiple contacts with different domains of the 23S rRNA in the assembled 50S subunit and ribosome.</text>
</comment>
<comment type="function">
    <text evidence="1">Forms part of the polypeptide exit tunnel.</text>
</comment>
<comment type="subunit">
    <text evidence="1">Part of the 50S ribosomal subunit.</text>
</comment>
<comment type="similarity">
    <text evidence="1">Belongs to the universal ribosomal protein uL4 family.</text>
</comment>
<accession>Q7MPI7</accession>